<keyword id="KW-0030">Aminoacyl-tRNA synthetase</keyword>
<keyword id="KW-0067">ATP-binding</keyword>
<keyword id="KW-0963">Cytoplasm</keyword>
<keyword id="KW-0436">Ligase</keyword>
<keyword id="KW-0479">Metal-binding</keyword>
<keyword id="KW-0547">Nucleotide-binding</keyword>
<keyword id="KW-0648">Protein biosynthesis</keyword>
<keyword id="KW-1185">Reference proteome</keyword>
<keyword id="KW-0694">RNA-binding</keyword>
<keyword id="KW-0820">tRNA-binding</keyword>
<keyword id="KW-0862">Zinc</keyword>
<gene>
    <name evidence="1" type="primary">alaS</name>
    <name type="ordered locus">Swoo_3339</name>
</gene>
<reference key="1">
    <citation type="submission" date="2008-02" db="EMBL/GenBank/DDBJ databases">
        <title>Complete sequence of Shewanella woodyi ATCC 51908.</title>
        <authorList>
            <consortium name="US DOE Joint Genome Institute"/>
            <person name="Copeland A."/>
            <person name="Lucas S."/>
            <person name="Lapidus A."/>
            <person name="Glavina del Rio T."/>
            <person name="Dalin E."/>
            <person name="Tice H."/>
            <person name="Bruce D."/>
            <person name="Goodwin L."/>
            <person name="Pitluck S."/>
            <person name="Sims D."/>
            <person name="Brettin T."/>
            <person name="Detter J.C."/>
            <person name="Han C."/>
            <person name="Kuske C.R."/>
            <person name="Schmutz J."/>
            <person name="Larimer F."/>
            <person name="Land M."/>
            <person name="Hauser L."/>
            <person name="Kyrpides N."/>
            <person name="Lykidis A."/>
            <person name="Zhao J.-S."/>
            <person name="Richardson P."/>
        </authorList>
    </citation>
    <scope>NUCLEOTIDE SEQUENCE [LARGE SCALE GENOMIC DNA]</scope>
    <source>
        <strain>ATCC 51908 / MS32</strain>
    </source>
</reference>
<feature type="chain" id="PRO_0000347795" description="Alanine--tRNA ligase">
    <location>
        <begin position="1"/>
        <end position="874"/>
    </location>
</feature>
<feature type="binding site" evidence="1">
    <location>
        <position position="562"/>
    </location>
    <ligand>
        <name>Zn(2+)</name>
        <dbReference type="ChEBI" id="CHEBI:29105"/>
    </ligand>
</feature>
<feature type="binding site" evidence="1">
    <location>
        <position position="566"/>
    </location>
    <ligand>
        <name>Zn(2+)</name>
        <dbReference type="ChEBI" id="CHEBI:29105"/>
    </ligand>
</feature>
<feature type="binding site" evidence="1">
    <location>
        <position position="664"/>
    </location>
    <ligand>
        <name>Zn(2+)</name>
        <dbReference type="ChEBI" id="CHEBI:29105"/>
    </ligand>
</feature>
<feature type="binding site" evidence="1">
    <location>
        <position position="668"/>
    </location>
    <ligand>
        <name>Zn(2+)</name>
        <dbReference type="ChEBI" id="CHEBI:29105"/>
    </ligand>
</feature>
<name>SYA_SHEWM</name>
<protein>
    <recommendedName>
        <fullName evidence="1">Alanine--tRNA ligase</fullName>
        <ecNumber evidence="1">6.1.1.7</ecNumber>
    </recommendedName>
    <alternativeName>
        <fullName evidence="1">Alanyl-tRNA synthetase</fullName>
        <shortName evidence="1">AlaRS</shortName>
    </alternativeName>
</protein>
<proteinExistence type="inferred from homology"/>
<accession>B1KPS5</accession>
<evidence type="ECO:0000255" key="1">
    <source>
        <dbReference type="HAMAP-Rule" id="MF_00036"/>
    </source>
</evidence>
<comment type="function">
    <text evidence="1">Catalyzes the attachment of alanine to tRNA(Ala) in a two-step reaction: alanine is first activated by ATP to form Ala-AMP and then transferred to the acceptor end of tRNA(Ala). Also edits incorrectly charged Ser-tRNA(Ala) and Gly-tRNA(Ala) via its editing domain.</text>
</comment>
<comment type="catalytic activity">
    <reaction evidence="1">
        <text>tRNA(Ala) + L-alanine + ATP = L-alanyl-tRNA(Ala) + AMP + diphosphate</text>
        <dbReference type="Rhea" id="RHEA:12540"/>
        <dbReference type="Rhea" id="RHEA-COMP:9657"/>
        <dbReference type="Rhea" id="RHEA-COMP:9923"/>
        <dbReference type="ChEBI" id="CHEBI:30616"/>
        <dbReference type="ChEBI" id="CHEBI:33019"/>
        <dbReference type="ChEBI" id="CHEBI:57972"/>
        <dbReference type="ChEBI" id="CHEBI:78442"/>
        <dbReference type="ChEBI" id="CHEBI:78497"/>
        <dbReference type="ChEBI" id="CHEBI:456215"/>
        <dbReference type="EC" id="6.1.1.7"/>
    </reaction>
</comment>
<comment type="cofactor">
    <cofactor evidence="1">
        <name>Zn(2+)</name>
        <dbReference type="ChEBI" id="CHEBI:29105"/>
    </cofactor>
    <text evidence="1">Binds 1 zinc ion per subunit.</text>
</comment>
<comment type="subcellular location">
    <subcellularLocation>
        <location evidence="1">Cytoplasm</location>
    </subcellularLocation>
</comment>
<comment type="domain">
    <text evidence="1">Consists of three domains; the N-terminal catalytic domain, the editing domain and the C-terminal C-Ala domain. The editing domain removes incorrectly charged amino acids, while the C-Ala domain, along with tRNA(Ala), serves as a bridge to cooperatively bring together the editing and aminoacylation centers thus stimulating deacylation of misacylated tRNAs.</text>
</comment>
<comment type="similarity">
    <text evidence="1">Belongs to the class-II aminoacyl-tRNA synthetase family.</text>
</comment>
<sequence length="874" mass="95119">MYQTTAALRSAFLEYFRTNGHQVVDSSSLVPVNDPTLLFTNAGMNQFKDVFLGEDKRSYTRATSSQRCVRAGGKHNDLDNVGYTARHHTFFEMLGNFSFGDYFKREAISFAWNFLTQELKLPKERLCVTIYETDDEAFDIWTKEIGVPAESLIRIGDNKGAPYASDNFWQMGDTGPCGPCSEIFYDHGDHIWGGRPGTPEEDGDRFIEIWNIVFMQYNRQASGEMLPLPKPSVDTGMGIERIAAIMQGVHSNYEIDIFQALIKKTAEILGVTDLENKSLRVISDHIRSCAFLIADGVMPSNEGRGYVLRRIIRRAVRHGNKLGATSSFFYKLVPTLIEVMGDAAKGLVETQAIVEKSLKAEEEQFARTLERGLGILDGALNELKGDVLDGETAFKLYDTYGFPVDLTADVCREREITVDEAGFEVAMAEQRSRAQAAGQFDTDYNDSLKIDEETHFSGYTELTAQGKVTAIYKAGESTDSLNAGEDAVIVLDSTPFYGESGGQCGDKGLLTAKGVEFDVKDTQKYGQAVGHQGTVNSGSISVGDTLEAIVDKKLRHRTELNHSVTHLLHAALRQLLGTHVTQKGSLVDAERLRFDFSHFEGVKPEELKAVEDLVNTQIRRNHKLSADVMDMDQAKERGAMALFGEKYTDEVRVVTMGDFSIELCGGTHVGRTGDIGLFKITSEGGIAAGVRRIEAVTGAAAMAYVAAQKAELDQAAALLKADSNSVVTKLKAQLDRTKLLEKELSQLKDKLAAATSADLAGEAKQVNGAKVLIKKLEGVDAGALRGLQDELKQKLGSGVVVLAIAGEAKVNLIVGVTKDLTAKVKAGELVASIAAQVGGKGGGRPDMAQAGGTEPEKLDGALEQVLPWLEERLA</sequence>
<organism>
    <name type="scientific">Shewanella woodyi (strain ATCC 51908 / MS32)</name>
    <dbReference type="NCBI Taxonomy" id="392500"/>
    <lineage>
        <taxon>Bacteria</taxon>
        <taxon>Pseudomonadati</taxon>
        <taxon>Pseudomonadota</taxon>
        <taxon>Gammaproteobacteria</taxon>
        <taxon>Alteromonadales</taxon>
        <taxon>Shewanellaceae</taxon>
        <taxon>Shewanella</taxon>
    </lineage>
</organism>
<dbReference type="EC" id="6.1.1.7" evidence="1"/>
<dbReference type="EMBL" id="CP000961">
    <property type="protein sequence ID" value="ACA87608.1"/>
    <property type="molecule type" value="Genomic_DNA"/>
</dbReference>
<dbReference type="RefSeq" id="WP_012325943.1">
    <property type="nucleotide sequence ID" value="NC_010506.1"/>
</dbReference>
<dbReference type="SMR" id="B1KPS5"/>
<dbReference type="STRING" id="392500.Swoo_3339"/>
<dbReference type="KEGG" id="swd:Swoo_3339"/>
<dbReference type="eggNOG" id="COG0013">
    <property type="taxonomic scope" value="Bacteria"/>
</dbReference>
<dbReference type="HOGENOM" id="CLU_004485_1_1_6"/>
<dbReference type="Proteomes" id="UP000002168">
    <property type="component" value="Chromosome"/>
</dbReference>
<dbReference type="GO" id="GO:0005829">
    <property type="term" value="C:cytosol"/>
    <property type="evidence" value="ECO:0007669"/>
    <property type="project" value="TreeGrafter"/>
</dbReference>
<dbReference type="GO" id="GO:0004813">
    <property type="term" value="F:alanine-tRNA ligase activity"/>
    <property type="evidence" value="ECO:0007669"/>
    <property type="project" value="UniProtKB-UniRule"/>
</dbReference>
<dbReference type="GO" id="GO:0002161">
    <property type="term" value="F:aminoacyl-tRNA deacylase activity"/>
    <property type="evidence" value="ECO:0007669"/>
    <property type="project" value="TreeGrafter"/>
</dbReference>
<dbReference type="GO" id="GO:0005524">
    <property type="term" value="F:ATP binding"/>
    <property type="evidence" value="ECO:0007669"/>
    <property type="project" value="UniProtKB-UniRule"/>
</dbReference>
<dbReference type="GO" id="GO:0000049">
    <property type="term" value="F:tRNA binding"/>
    <property type="evidence" value="ECO:0007669"/>
    <property type="project" value="UniProtKB-KW"/>
</dbReference>
<dbReference type="GO" id="GO:0008270">
    <property type="term" value="F:zinc ion binding"/>
    <property type="evidence" value="ECO:0007669"/>
    <property type="project" value="UniProtKB-UniRule"/>
</dbReference>
<dbReference type="GO" id="GO:0006419">
    <property type="term" value="P:alanyl-tRNA aminoacylation"/>
    <property type="evidence" value="ECO:0007669"/>
    <property type="project" value="UniProtKB-UniRule"/>
</dbReference>
<dbReference type="GO" id="GO:0045892">
    <property type="term" value="P:negative regulation of DNA-templated transcription"/>
    <property type="evidence" value="ECO:0007669"/>
    <property type="project" value="TreeGrafter"/>
</dbReference>
<dbReference type="CDD" id="cd00673">
    <property type="entry name" value="AlaRS_core"/>
    <property type="match status" value="1"/>
</dbReference>
<dbReference type="FunFam" id="2.40.30.130:FF:000001">
    <property type="entry name" value="Alanine--tRNA ligase"/>
    <property type="match status" value="1"/>
</dbReference>
<dbReference type="FunFam" id="3.10.310.40:FF:000001">
    <property type="entry name" value="Alanine--tRNA ligase"/>
    <property type="match status" value="1"/>
</dbReference>
<dbReference type="FunFam" id="3.30.54.20:FF:000001">
    <property type="entry name" value="Alanine--tRNA ligase"/>
    <property type="match status" value="1"/>
</dbReference>
<dbReference type="FunFam" id="3.30.930.10:FF:000004">
    <property type="entry name" value="Alanine--tRNA ligase"/>
    <property type="match status" value="1"/>
</dbReference>
<dbReference type="FunFam" id="3.30.980.10:FF:000004">
    <property type="entry name" value="Alanine--tRNA ligase, cytoplasmic"/>
    <property type="match status" value="1"/>
</dbReference>
<dbReference type="Gene3D" id="2.40.30.130">
    <property type="match status" value="1"/>
</dbReference>
<dbReference type="Gene3D" id="3.10.310.40">
    <property type="match status" value="1"/>
</dbReference>
<dbReference type="Gene3D" id="3.30.54.20">
    <property type="match status" value="1"/>
</dbReference>
<dbReference type="Gene3D" id="6.10.250.550">
    <property type="match status" value="1"/>
</dbReference>
<dbReference type="Gene3D" id="3.30.930.10">
    <property type="entry name" value="Bira Bifunctional Protein, Domain 2"/>
    <property type="match status" value="1"/>
</dbReference>
<dbReference type="Gene3D" id="3.30.980.10">
    <property type="entry name" value="Threonyl-trna Synthetase, Chain A, domain 2"/>
    <property type="match status" value="1"/>
</dbReference>
<dbReference type="HAMAP" id="MF_00036_B">
    <property type="entry name" value="Ala_tRNA_synth_B"/>
    <property type="match status" value="1"/>
</dbReference>
<dbReference type="InterPro" id="IPR045864">
    <property type="entry name" value="aa-tRNA-synth_II/BPL/LPL"/>
</dbReference>
<dbReference type="InterPro" id="IPR002318">
    <property type="entry name" value="Ala-tRNA-lgiase_IIc"/>
</dbReference>
<dbReference type="InterPro" id="IPR018162">
    <property type="entry name" value="Ala-tRNA-ligase_IIc_anticod-bd"/>
</dbReference>
<dbReference type="InterPro" id="IPR018165">
    <property type="entry name" value="Ala-tRNA-synth_IIc_core"/>
</dbReference>
<dbReference type="InterPro" id="IPR018164">
    <property type="entry name" value="Ala-tRNA-synth_IIc_N"/>
</dbReference>
<dbReference type="InterPro" id="IPR050058">
    <property type="entry name" value="Ala-tRNA_ligase"/>
</dbReference>
<dbReference type="InterPro" id="IPR023033">
    <property type="entry name" value="Ala_tRNA_ligase_euk/bac"/>
</dbReference>
<dbReference type="InterPro" id="IPR003156">
    <property type="entry name" value="DHHA1_dom"/>
</dbReference>
<dbReference type="InterPro" id="IPR018163">
    <property type="entry name" value="Thr/Ala-tRNA-synth_IIc_edit"/>
</dbReference>
<dbReference type="InterPro" id="IPR009000">
    <property type="entry name" value="Transl_B-barrel_sf"/>
</dbReference>
<dbReference type="InterPro" id="IPR012947">
    <property type="entry name" value="tRNA_SAD"/>
</dbReference>
<dbReference type="NCBIfam" id="TIGR00344">
    <property type="entry name" value="alaS"/>
    <property type="match status" value="1"/>
</dbReference>
<dbReference type="PANTHER" id="PTHR11777:SF9">
    <property type="entry name" value="ALANINE--TRNA LIGASE, CYTOPLASMIC"/>
    <property type="match status" value="1"/>
</dbReference>
<dbReference type="PANTHER" id="PTHR11777">
    <property type="entry name" value="ALANYL-TRNA SYNTHETASE"/>
    <property type="match status" value="1"/>
</dbReference>
<dbReference type="Pfam" id="PF02272">
    <property type="entry name" value="DHHA1"/>
    <property type="match status" value="1"/>
</dbReference>
<dbReference type="Pfam" id="PF01411">
    <property type="entry name" value="tRNA-synt_2c"/>
    <property type="match status" value="1"/>
</dbReference>
<dbReference type="Pfam" id="PF07973">
    <property type="entry name" value="tRNA_SAD"/>
    <property type="match status" value="1"/>
</dbReference>
<dbReference type="PRINTS" id="PR00980">
    <property type="entry name" value="TRNASYNTHALA"/>
</dbReference>
<dbReference type="SMART" id="SM00863">
    <property type="entry name" value="tRNA_SAD"/>
    <property type="match status" value="1"/>
</dbReference>
<dbReference type="SUPFAM" id="SSF55681">
    <property type="entry name" value="Class II aaRS and biotin synthetases"/>
    <property type="match status" value="1"/>
</dbReference>
<dbReference type="SUPFAM" id="SSF101353">
    <property type="entry name" value="Putative anticodon-binding domain of alanyl-tRNA synthetase (AlaRS)"/>
    <property type="match status" value="1"/>
</dbReference>
<dbReference type="SUPFAM" id="SSF55186">
    <property type="entry name" value="ThrRS/AlaRS common domain"/>
    <property type="match status" value="1"/>
</dbReference>
<dbReference type="SUPFAM" id="SSF50447">
    <property type="entry name" value="Translation proteins"/>
    <property type="match status" value="1"/>
</dbReference>
<dbReference type="PROSITE" id="PS50860">
    <property type="entry name" value="AA_TRNA_LIGASE_II_ALA"/>
    <property type="match status" value="1"/>
</dbReference>